<sequence length="343" mass="38685">MVSTEDFDYNLPEELIAQTPMIERAASRLLVMDHETGALEDKVFYDIIDELNPGDAVVMNNTRVLPARLYGVKPDTGGHEEVLLLNNTHDDEWEVLMKPAKRAKVGTEVVFGDGQLRAIVTKELEHGGRMIEFKYDGIFMQILEALGEMPLPPYIKEKLDDPEMYQTVYAKEPGSAAAPTAGFHWTEELLQKVQDKGIKLVYLTLHVGLGTFRPVSEDNVEDHKMHSEFYRLTEEAAATLNEVKQNGGRIVATGTTSIRTLETIATKFDGEIKADSGWTEIFIKPGYQWKAVDAFITNFHLPKSTLVMLVASFTGRENILNAYQHAVDERYRFFSFGDAMFVK</sequence>
<name>QUEA_LATSS</name>
<evidence type="ECO:0000255" key="1">
    <source>
        <dbReference type="HAMAP-Rule" id="MF_00113"/>
    </source>
</evidence>
<proteinExistence type="inferred from homology"/>
<comment type="function">
    <text evidence="1">Transfers and isomerizes the ribose moiety from AdoMet to the 7-aminomethyl group of 7-deazaguanine (preQ1-tRNA) to give epoxyqueuosine (oQ-tRNA).</text>
</comment>
<comment type="catalytic activity">
    <reaction evidence="1">
        <text>7-aminomethyl-7-carbaguanosine(34) in tRNA + S-adenosyl-L-methionine = epoxyqueuosine(34) in tRNA + adenine + L-methionine + 2 H(+)</text>
        <dbReference type="Rhea" id="RHEA:32155"/>
        <dbReference type="Rhea" id="RHEA-COMP:10342"/>
        <dbReference type="Rhea" id="RHEA-COMP:18582"/>
        <dbReference type="ChEBI" id="CHEBI:15378"/>
        <dbReference type="ChEBI" id="CHEBI:16708"/>
        <dbReference type="ChEBI" id="CHEBI:57844"/>
        <dbReference type="ChEBI" id="CHEBI:59789"/>
        <dbReference type="ChEBI" id="CHEBI:82833"/>
        <dbReference type="ChEBI" id="CHEBI:194443"/>
        <dbReference type="EC" id="2.4.99.17"/>
    </reaction>
</comment>
<comment type="pathway">
    <text evidence="1">tRNA modification; tRNA-queuosine biosynthesis.</text>
</comment>
<comment type="subunit">
    <text evidence="1">Monomer.</text>
</comment>
<comment type="subcellular location">
    <subcellularLocation>
        <location evidence="1">Cytoplasm</location>
    </subcellularLocation>
</comment>
<comment type="similarity">
    <text evidence="1">Belongs to the QueA family.</text>
</comment>
<organism>
    <name type="scientific">Latilactobacillus sakei subsp. sakei (strain 23K)</name>
    <name type="common">Lactobacillus sakei subsp. sakei</name>
    <dbReference type="NCBI Taxonomy" id="314315"/>
    <lineage>
        <taxon>Bacteria</taxon>
        <taxon>Bacillati</taxon>
        <taxon>Bacillota</taxon>
        <taxon>Bacilli</taxon>
        <taxon>Lactobacillales</taxon>
        <taxon>Lactobacillaceae</taxon>
        <taxon>Latilactobacillus</taxon>
    </lineage>
</organism>
<reference key="1">
    <citation type="journal article" date="2005" name="Nat. Biotechnol.">
        <title>The complete genome sequence of the meat-borne lactic acid bacterium Lactobacillus sakei 23K.</title>
        <authorList>
            <person name="Chaillou S."/>
            <person name="Champomier-Verges M.-C."/>
            <person name="Cornet M."/>
            <person name="Crutz-Le Coq A.-M."/>
            <person name="Dudez A.-M."/>
            <person name="Martin V."/>
            <person name="Beaufils S."/>
            <person name="Darbon-Rongere E."/>
            <person name="Bossy R."/>
            <person name="Loux V."/>
            <person name="Zagorec M."/>
        </authorList>
    </citation>
    <scope>NUCLEOTIDE SEQUENCE [LARGE SCALE GENOMIC DNA]</scope>
    <source>
        <strain>23K</strain>
    </source>
</reference>
<protein>
    <recommendedName>
        <fullName evidence="1">S-adenosylmethionine:tRNA ribosyltransferase-isomerase</fullName>
        <ecNumber evidence="1">2.4.99.17</ecNumber>
    </recommendedName>
    <alternativeName>
        <fullName evidence="1">Queuosine biosynthesis protein QueA</fullName>
    </alternativeName>
</protein>
<keyword id="KW-0963">Cytoplasm</keyword>
<keyword id="KW-0671">Queuosine biosynthesis</keyword>
<keyword id="KW-1185">Reference proteome</keyword>
<keyword id="KW-0949">S-adenosyl-L-methionine</keyword>
<keyword id="KW-0808">Transferase</keyword>
<gene>
    <name evidence="1" type="primary">queA</name>
    <name type="ordered locus">LCA_0368</name>
</gene>
<dbReference type="EC" id="2.4.99.17" evidence="1"/>
<dbReference type="EMBL" id="CR936503">
    <property type="protein sequence ID" value="CAI54669.1"/>
    <property type="molecule type" value="Genomic_DNA"/>
</dbReference>
<dbReference type="RefSeq" id="WP_011374077.1">
    <property type="nucleotide sequence ID" value="NC_007576.1"/>
</dbReference>
<dbReference type="SMR" id="Q38YQ8"/>
<dbReference type="STRING" id="314315.LCA_0368"/>
<dbReference type="KEGG" id="lsa:LCA_0368"/>
<dbReference type="eggNOG" id="COG0809">
    <property type="taxonomic scope" value="Bacteria"/>
</dbReference>
<dbReference type="HOGENOM" id="CLU_039110_1_0_9"/>
<dbReference type="OrthoDB" id="9805933at2"/>
<dbReference type="UniPathway" id="UPA00392"/>
<dbReference type="Proteomes" id="UP000002707">
    <property type="component" value="Chromosome"/>
</dbReference>
<dbReference type="GO" id="GO:0005737">
    <property type="term" value="C:cytoplasm"/>
    <property type="evidence" value="ECO:0007669"/>
    <property type="project" value="UniProtKB-SubCell"/>
</dbReference>
<dbReference type="GO" id="GO:0051075">
    <property type="term" value="F:S-adenosylmethionine:tRNA ribosyltransferase-isomerase activity"/>
    <property type="evidence" value="ECO:0007669"/>
    <property type="project" value="UniProtKB-EC"/>
</dbReference>
<dbReference type="GO" id="GO:0008616">
    <property type="term" value="P:queuosine biosynthetic process"/>
    <property type="evidence" value="ECO:0007669"/>
    <property type="project" value="UniProtKB-UniRule"/>
</dbReference>
<dbReference type="GO" id="GO:0002099">
    <property type="term" value="P:tRNA wobble guanine modification"/>
    <property type="evidence" value="ECO:0007669"/>
    <property type="project" value="TreeGrafter"/>
</dbReference>
<dbReference type="FunFam" id="2.40.10.240:FF:000002">
    <property type="entry name" value="S-adenosylmethionine:tRNA ribosyltransferase-isomerase"/>
    <property type="match status" value="1"/>
</dbReference>
<dbReference type="FunFam" id="3.40.1780.10:FF:000001">
    <property type="entry name" value="S-adenosylmethionine:tRNA ribosyltransferase-isomerase"/>
    <property type="match status" value="1"/>
</dbReference>
<dbReference type="Gene3D" id="2.40.10.240">
    <property type="entry name" value="QueA-like"/>
    <property type="match status" value="1"/>
</dbReference>
<dbReference type="Gene3D" id="3.40.1780.10">
    <property type="entry name" value="QueA-like"/>
    <property type="match status" value="2"/>
</dbReference>
<dbReference type="HAMAP" id="MF_00113">
    <property type="entry name" value="QueA"/>
    <property type="match status" value="1"/>
</dbReference>
<dbReference type="InterPro" id="IPR003699">
    <property type="entry name" value="QueA"/>
</dbReference>
<dbReference type="InterPro" id="IPR042118">
    <property type="entry name" value="QueA_dom1"/>
</dbReference>
<dbReference type="InterPro" id="IPR042119">
    <property type="entry name" value="QueA_dom2"/>
</dbReference>
<dbReference type="InterPro" id="IPR036100">
    <property type="entry name" value="QueA_sf"/>
</dbReference>
<dbReference type="NCBIfam" id="NF001140">
    <property type="entry name" value="PRK00147.1"/>
    <property type="match status" value="1"/>
</dbReference>
<dbReference type="NCBIfam" id="TIGR00113">
    <property type="entry name" value="queA"/>
    <property type="match status" value="1"/>
</dbReference>
<dbReference type="PANTHER" id="PTHR30307">
    <property type="entry name" value="S-ADENOSYLMETHIONINE:TRNA RIBOSYLTRANSFERASE-ISOMERASE"/>
    <property type="match status" value="1"/>
</dbReference>
<dbReference type="PANTHER" id="PTHR30307:SF0">
    <property type="entry name" value="S-ADENOSYLMETHIONINE:TRNA RIBOSYLTRANSFERASE-ISOMERASE"/>
    <property type="match status" value="1"/>
</dbReference>
<dbReference type="Pfam" id="PF02547">
    <property type="entry name" value="Queuosine_synth"/>
    <property type="match status" value="1"/>
</dbReference>
<dbReference type="SUPFAM" id="SSF111337">
    <property type="entry name" value="QueA-like"/>
    <property type="match status" value="1"/>
</dbReference>
<accession>Q38YQ8</accession>
<feature type="chain" id="PRO_0000231344" description="S-adenosylmethionine:tRNA ribosyltransferase-isomerase">
    <location>
        <begin position="1"/>
        <end position="343"/>
    </location>
</feature>